<comment type="function">
    <text>Involved in oxygen transport from the lung to the various peripheral tissues.</text>
</comment>
<comment type="subunit">
    <text>Heterotetramer of two alpha chains and two beta chains.</text>
</comment>
<comment type="tissue specificity">
    <text>Red blood cells.</text>
</comment>
<comment type="similarity">
    <text evidence="3">Belongs to the globin family.</text>
</comment>
<accession>P68225</accession>
<accession>P02027</accession>
<accession>Q9TSL4</accession>
<gene>
    <name type="primary">HBB</name>
</gene>
<organism>
    <name type="scientific">Macaca nemestrina</name>
    <name type="common">Pig-tailed macaque</name>
    <dbReference type="NCBI Taxonomy" id="9545"/>
    <lineage>
        <taxon>Eukaryota</taxon>
        <taxon>Metazoa</taxon>
        <taxon>Chordata</taxon>
        <taxon>Craniata</taxon>
        <taxon>Vertebrata</taxon>
        <taxon>Euteleostomi</taxon>
        <taxon>Mammalia</taxon>
        <taxon>Eutheria</taxon>
        <taxon>Euarchontoglires</taxon>
        <taxon>Primates</taxon>
        <taxon>Haplorrhini</taxon>
        <taxon>Catarrhini</taxon>
        <taxon>Cercopithecidae</taxon>
        <taxon>Cercopithecinae</taxon>
        <taxon>Macaca</taxon>
    </lineage>
</organism>
<keyword id="KW-0007">Acetylation</keyword>
<keyword id="KW-0903">Direct protein sequencing</keyword>
<keyword id="KW-0349">Heme</keyword>
<keyword id="KW-0408">Iron</keyword>
<keyword id="KW-0479">Metal-binding</keyword>
<keyword id="KW-0561">Oxygen transport</keyword>
<keyword id="KW-0597">Phosphoprotein</keyword>
<keyword id="KW-1185">Reference proteome</keyword>
<keyword id="KW-0702">S-nitrosylation</keyword>
<keyword id="KW-0813">Transport</keyword>
<protein>
    <recommendedName>
        <fullName>Hemoglobin subunit beta</fullName>
    </recommendedName>
    <alternativeName>
        <fullName>Beta-globin</fullName>
    </alternativeName>
    <alternativeName>
        <fullName>Hemoglobin beta chain</fullName>
    </alternativeName>
</protein>
<dbReference type="PIR" id="S10689">
    <property type="entry name" value="HBMQPM"/>
</dbReference>
<dbReference type="SMR" id="P68225"/>
<dbReference type="STRING" id="9545.ENSMNEP00000038839"/>
<dbReference type="GeneID" id="105468624"/>
<dbReference type="KEGG" id="mni:105468624"/>
<dbReference type="OrthoDB" id="2134at314294"/>
<dbReference type="Proteomes" id="UP000233120">
    <property type="component" value="Unassembled WGS sequence"/>
</dbReference>
<dbReference type="GO" id="GO:0072562">
    <property type="term" value="C:blood microparticle"/>
    <property type="evidence" value="ECO:0007669"/>
    <property type="project" value="TreeGrafter"/>
</dbReference>
<dbReference type="GO" id="GO:0031838">
    <property type="term" value="C:haptoglobin-hemoglobin complex"/>
    <property type="evidence" value="ECO:0007669"/>
    <property type="project" value="TreeGrafter"/>
</dbReference>
<dbReference type="GO" id="GO:0005833">
    <property type="term" value="C:hemoglobin complex"/>
    <property type="evidence" value="ECO:0007669"/>
    <property type="project" value="InterPro"/>
</dbReference>
<dbReference type="GO" id="GO:0031720">
    <property type="term" value="F:haptoglobin binding"/>
    <property type="evidence" value="ECO:0007669"/>
    <property type="project" value="TreeGrafter"/>
</dbReference>
<dbReference type="GO" id="GO:0020037">
    <property type="term" value="F:heme binding"/>
    <property type="evidence" value="ECO:0007669"/>
    <property type="project" value="InterPro"/>
</dbReference>
<dbReference type="GO" id="GO:0031721">
    <property type="term" value="F:hemoglobin alpha binding"/>
    <property type="evidence" value="ECO:0007669"/>
    <property type="project" value="TreeGrafter"/>
</dbReference>
<dbReference type="GO" id="GO:0046872">
    <property type="term" value="F:metal ion binding"/>
    <property type="evidence" value="ECO:0007669"/>
    <property type="project" value="UniProtKB-KW"/>
</dbReference>
<dbReference type="GO" id="GO:0043177">
    <property type="term" value="F:organic acid binding"/>
    <property type="evidence" value="ECO:0007669"/>
    <property type="project" value="TreeGrafter"/>
</dbReference>
<dbReference type="GO" id="GO:0019825">
    <property type="term" value="F:oxygen binding"/>
    <property type="evidence" value="ECO:0007669"/>
    <property type="project" value="InterPro"/>
</dbReference>
<dbReference type="GO" id="GO:0005344">
    <property type="term" value="F:oxygen carrier activity"/>
    <property type="evidence" value="ECO:0007669"/>
    <property type="project" value="UniProtKB-KW"/>
</dbReference>
<dbReference type="GO" id="GO:0004601">
    <property type="term" value="F:peroxidase activity"/>
    <property type="evidence" value="ECO:0007669"/>
    <property type="project" value="TreeGrafter"/>
</dbReference>
<dbReference type="GO" id="GO:0042744">
    <property type="term" value="P:hydrogen peroxide catabolic process"/>
    <property type="evidence" value="ECO:0007669"/>
    <property type="project" value="TreeGrafter"/>
</dbReference>
<dbReference type="CDD" id="cd08925">
    <property type="entry name" value="Hb-beta-like"/>
    <property type="match status" value="1"/>
</dbReference>
<dbReference type="FunFam" id="1.10.490.10:FF:000001">
    <property type="entry name" value="Hemoglobin subunit beta"/>
    <property type="match status" value="1"/>
</dbReference>
<dbReference type="Gene3D" id="1.10.490.10">
    <property type="entry name" value="Globins"/>
    <property type="match status" value="1"/>
</dbReference>
<dbReference type="InterPro" id="IPR000971">
    <property type="entry name" value="Globin"/>
</dbReference>
<dbReference type="InterPro" id="IPR009050">
    <property type="entry name" value="Globin-like_sf"/>
</dbReference>
<dbReference type="InterPro" id="IPR012292">
    <property type="entry name" value="Globin/Proto"/>
</dbReference>
<dbReference type="InterPro" id="IPR002337">
    <property type="entry name" value="Hemoglobin_b"/>
</dbReference>
<dbReference type="InterPro" id="IPR050056">
    <property type="entry name" value="Hemoglobin_oxygen_transport"/>
</dbReference>
<dbReference type="PANTHER" id="PTHR11442">
    <property type="entry name" value="HEMOGLOBIN FAMILY MEMBER"/>
    <property type="match status" value="1"/>
</dbReference>
<dbReference type="PANTHER" id="PTHR11442:SF42">
    <property type="entry name" value="HEMOGLOBIN SUBUNIT BETA"/>
    <property type="match status" value="1"/>
</dbReference>
<dbReference type="Pfam" id="PF00042">
    <property type="entry name" value="Globin"/>
    <property type="match status" value="1"/>
</dbReference>
<dbReference type="PRINTS" id="PR00814">
    <property type="entry name" value="BETAHAEM"/>
</dbReference>
<dbReference type="SUPFAM" id="SSF46458">
    <property type="entry name" value="Globin-like"/>
    <property type="match status" value="1"/>
</dbReference>
<dbReference type="PROSITE" id="PS01033">
    <property type="entry name" value="GLOBIN"/>
    <property type="match status" value="1"/>
</dbReference>
<sequence>MVHLTPEEKNAVTTLWGKVNVDEVGGEALGRLLVVYPWTQRFFESFGDLSSPDAVMGNPKVKAHGKKVLGAFSDGLNHLDNLKGTFAQLSELHCDKLHVDPENFKLLGNVLVCVLAHHFGKEFTPQVQAAYQKVVAGVANALAHKYH</sequence>
<reference key="1">
    <citation type="journal article" date="1987" name="Biol. Chem. Hoppe-Seyler">
        <title>Hemoglobin sequences.</title>
        <authorList>
            <person name="Kleinschmidt T."/>
            <person name="Sgouros J.G."/>
        </authorList>
    </citation>
    <scope>PROTEIN SEQUENCE OF 2-147</scope>
</reference>
<reference key="2">
    <citation type="journal article" date="1974" name="Am. J. Phys. Anthropol.">
        <title>Amino acid compositions of the tryptic peptides comprising the beta-hemoglobin chain of Macaca nemestrina.</title>
        <authorList>
            <person name="Nute P.E."/>
            <person name="Pataryas H.A."/>
        </authorList>
    </citation>
    <scope>PROTEIN SEQUENCE OF 2-147</scope>
</reference>
<evidence type="ECO:0000250" key="1">
    <source>
        <dbReference type="UniProtKB" id="P02086"/>
    </source>
</evidence>
<evidence type="ECO:0000250" key="2">
    <source>
        <dbReference type="UniProtKB" id="P68871"/>
    </source>
</evidence>
<evidence type="ECO:0000255" key="3">
    <source>
        <dbReference type="PROSITE-ProRule" id="PRU00238"/>
    </source>
</evidence>
<evidence type="ECO:0000269" key="4">
    <source>
    </source>
</evidence>
<evidence type="ECO:0000269" key="5">
    <source>
    </source>
</evidence>
<name>HBB_MACNE</name>
<feature type="initiator methionine" description="Removed" evidence="1 4 5">
    <location>
        <position position="1"/>
    </location>
</feature>
<feature type="chain" id="PRO_0000053005" description="Hemoglobin subunit beta">
    <location>
        <begin position="2"/>
        <end position="147"/>
    </location>
</feature>
<feature type="domain" description="Globin" evidence="3">
    <location>
        <begin position="3"/>
        <end position="147"/>
    </location>
</feature>
<feature type="binding site" description="distal binding residue">
    <location>
        <position position="64"/>
    </location>
    <ligand>
        <name>heme b</name>
        <dbReference type="ChEBI" id="CHEBI:60344"/>
    </ligand>
    <ligandPart>
        <name>Fe</name>
        <dbReference type="ChEBI" id="CHEBI:18248"/>
    </ligandPart>
</feature>
<feature type="binding site" description="proximal binding residue">
    <location>
        <position position="93"/>
    </location>
    <ligand>
        <name>heme b</name>
        <dbReference type="ChEBI" id="CHEBI:60344"/>
    </ligand>
    <ligandPart>
        <name>Fe</name>
        <dbReference type="ChEBI" id="CHEBI:18248"/>
    </ligandPart>
</feature>
<feature type="modified residue" description="N-acetylvaline" evidence="1">
    <location>
        <position position="2"/>
    </location>
</feature>
<feature type="modified residue" description="Phosphothreonine" evidence="2">
    <location>
        <position position="13"/>
    </location>
</feature>
<feature type="modified residue" description="Phosphoserine" evidence="2">
    <location>
        <position position="45"/>
    </location>
</feature>
<feature type="modified residue" description="N6-acetyllysine" evidence="2">
    <location>
        <position position="60"/>
    </location>
</feature>
<feature type="modified residue" description="N6-acetyllysine" evidence="2">
    <location>
        <position position="83"/>
    </location>
</feature>
<feature type="modified residue" description="S-nitrosocysteine" evidence="2">
    <location>
        <position position="94"/>
    </location>
</feature>
<feature type="modified residue" description="N6-acetyllysine" evidence="2">
    <location>
        <position position="145"/>
    </location>
</feature>
<proteinExistence type="evidence at protein level"/>